<protein>
    <recommendedName>
        <fullName>Tubulin gamma-2 chain</fullName>
    </recommendedName>
    <alternativeName>
        <fullName>Gamma-2-tubulin</fullName>
    </alternativeName>
</protein>
<gene>
    <name type="primary">TUBG2</name>
    <name type="synonym">TUBC</name>
    <name type="synonym">TUBG</name>
</gene>
<feature type="chain" id="PRO_0000048472" description="Tubulin gamma-2 chain">
    <location>
        <begin position="1"/>
        <end position="469"/>
    </location>
</feature>
<feature type="binding site" evidence="2">
    <location>
        <begin position="142"/>
        <end position="148"/>
    </location>
    <ligand>
        <name>GTP</name>
        <dbReference type="ChEBI" id="CHEBI:37565"/>
    </ligand>
</feature>
<keyword id="KW-0963">Cytoplasm</keyword>
<keyword id="KW-0206">Cytoskeleton</keyword>
<keyword id="KW-0342">GTP-binding</keyword>
<keyword id="KW-0493">Microtubule</keyword>
<keyword id="KW-0547">Nucleotide-binding</keyword>
<keyword id="KW-1185">Reference proteome</keyword>
<evidence type="ECO:0000250" key="1">
    <source>
        <dbReference type="UniProtKB" id="P38557"/>
    </source>
</evidence>
<evidence type="ECO:0000255" key="2"/>
<evidence type="ECO:0000305" key="3"/>
<organism>
    <name type="scientific">Zea mays</name>
    <name type="common">Maize</name>
    <dbReference type="NCBI Taxonomy" id="4577"/>
    <lineage>
        <taxon>Eukaryota</taxon>
        <taxon>Viridiplantae</taxon>
        <taxon>Streptophyta</taxon>
        <taxon>Embryophyta</taxon>
        <taxon>Tracheophyta</taxon>
        <taxon>Spermatophyta</taxon>
        <taxon>Magnoliopsida</taxon>
        <taxon>Liliopsida</taxon>
        <taxon>Poales</taxon>
        <taxon>Poaceae</taxon>
        <taxon>PACMAD clade</taxon>
        <taxon>Panicoideae</taxon>
        <taxon>Andropogonodae</taxon>
        <taxon>Andropogoneae</taxon>
        <taxon>Tripsacinae</taxon>
        <taxon>Zea</taxon>
    </lineage>
</organism>
<dbReference type="EMBL" id="X78891">
    <property type="protein sequence ID" value="CAA55488.1"/>
    <property type="molecule type" value="mRNA"/>
</dbReference>
<dbReference type="PIR" id="S44193">
    <property type="entry name" value="S44193"/>
</dbReference>
<dbReference type="RefSeq" id="NP_001105460.1">
    <property type="nucleotide sequence ID" value="NM_001111990.1"/>
</dbReference>
<dbReference type="RefSeq" id="XP_008648305.1">
    <property type="nucleotide sequence ID" value="XM_008650083.1"/>
</dbReference>
<dbReference type="SMR" id="Q41808"/>
<dbReference type="FunCoup" id="Q41808">
    <property type="interactions" value="3195"/>
</dbReference>
<dbReference type="STRING" id="4577.Q41808"/>
<dbReference type="PaxDb" id="4577-GRMZM2G085970_P01"/>
<dbReference type="EnsemblPlants" id="Zm00001eb282650_T001">
    <property type="protein sequence ID" value="Zm00001eb282650_P001"/>
    <property type="gene ID" value="Zm00001eb282650"/>
</dbReference>
<dbReference type="EnsemblPlants" id="Zm00001eb282650_T002">
    <property type="protein sequence ID" value="Zm00001eb282650_P002"/>
    <property type="gene ID" value="Zm00001eb282650"/>
</dbReference>
<dbReference type="GeneID" id="542424"/>
<dbReference type="Gramene" id="Zm00001eb282650_T001">
    <property type="protein sequence ID" value="Zm00001eb282650_P001"/>
    <property type="gene ID" value="Zm00001eb282650"/>
</dbReference>
<dbReference type="Gramene" id="Zm00001eb282650_T002">
    <property type="protein sequence ID" value="Zm00001eb282650_P002"/>
    <property type="gene ID" value="Zm00001eb282650"/>
</dbReference>
<dbReference type="MaizeGDB" id="113512"/>
<dbReference type="eggNOG" id="KOG1374">
    <property type="taxonomic scope" value="Eukaryota"/>
</dbReference>
<dbReference type="InParanoid" id="Q41808"/>
<dbReference type="OMA" id="HRYISIL"/>
<dbReference type="OrthoDB" id="10249382at2759"/>
<dbReference type="Proteomes" id="UP000007305">
    <property type="component" value="Chromosome 6"/>
</dbReference>
<dbReference type="ExpressionAtlas" id="Q41808">
    <property type="expression patterns" value="baseline and differential"/>
</dbReference>
<dbReference type="GO" id="GO:0005737">
    <property type="term" value="C:cytoplasm"/>
    <property type="evidence" value="ECO:0007669"/>
    <property type="project" value="UniProtKB-KW"/>
</dbReference>
<dbReference type="GO" id="GO:0000931">
    <property type="term" value="C:gamma-tubulin ring complex"/>
    <property type="evidence" value="ECO:0000318"/>
    <property type="project" value="GO_Central"/>
</dbReference>
<dbReference type="GO" id="GO:0005874">
    <property type="term" value="C:microtubule"/>
    <property type="evidence" value="ECO:0007669"/>
    <property type="project" value="UniProtKB-KW"/>
</dbReference>
<dbReference type="GO" id="GO:0005634">
    <property type="term" value="C:nucleus"/>
    <property type="evidence" value="ECO:0000318"/>
    <property type="project" value="GO_Central"/>
</dbReference>
<dbReference type="GO" id="GO:0005819">
    <property type="term" value="C:spindle"/>
    <property type="evidence" value="ECO:0000318"/>
    <property type="project" value="GO_Central"/>
</dbReference>
<dbReference type="GO" id="GO:0005525">
    <property type="term" value="F:GTP binding"/>
    <property type="evidence" value="ECO:0000318"/>
    <property type="project" value="GO_Central"/>
</dbReference>
<dbReference type="GO" id="GO:0140490">
    <property type="term" value="F:microtubule nucleator activity"/>
    <property type="evidence" value="ECO:0000318"/>
    <property type="project" value="GO_Central"/>
</dbReference>
<dbReference type="GO" id="GO:0031122">
    <property type="term" value="P:cytoplasmic microtubule organization"/>
    <property type="evidence" value="ECO:0007669"/>
    <property type="project" value="InterPro"/>
</dbReference>
<dbReference type="GO" id="GO:0000212">
    <property type="term" value="P:meiotic spindle organization"/>
    <property type="evidence" value="ECO:0000318"/>
    <property type="project" value="GO_Central"/>
</dbReference>
<dbReference type="GO" id="GO:0007020">
    <property type="term" value="P:microtubule nucleation"/>
    <property type="evidence" value="ECO:0000318"/>
    <property type="project" value="GO_Central"/>
</dbReference>
<dbReference type="GO" id="GO:0000278">
    <property type="term" value="P:mitotic cell cycle"/>
    <property type="evidence" value="ECO:0000318"/>
    <property type="project" value="GO_Central"/>
</dbReference>
<dbReference type="GO" id="GO:0000070">
    <property type="term" value="P:mitotic sister chromatid segregation"/>
    <property type="evidence" value="ECO:0000318"/>
    <property type="project" value="GO_Central"/>
</dbReference>
<dbReference type="GO" id="GO:0007052">
    <property type="term" value="P:mitotic spindle organization"/>
    <property type="evidence" value="ECO:0000318"/>
    <property type="project" value="GO_Central"/>
</dbReference>
<dbReference type="CDD" id="cd02188">
    <property type="entry name" value="gamma_tubulin"/>
    <property type="match status" value="1"/>
</dbReference>
<dbReference type="FunFam" id="1.10.287.600:FF:000004">
    <property type="entry name" value="Tubulin gamma chain"/>
    <property type="match status" value="1"/>
</dbReference>
<dbReference type="FunFam" id="3.30.1330.20:FF:000003">
    <property type="entry name" value="Tubulin gamma chain"/>
    <property type="match status" value="1"/>
</dbReference>
<dbReference type="FunFam" id="3.40.50.1440:FF:000010">
    <property type="entry name" value="Tubulin gamma chain"/>
    <property type="match status" value="1"/>
</dbReference>
<dbReference type="Gene3D" id="1.10.287.600">
    <property type="entry name" value="Helix hairpin bin"/>
    <property type="match status" value="1"/>
</dbReference>
<dbReference type="Gene3D" id="3.30.1330.20">
    <property type="entry name" value="Tubulin/FtsZ, C-terminal domain"/>
    <property type="match status" value="1"/>
</dbReference>
<dbReference type="Gene3D" id="3.40.50.1440">
    <property type="entry name" value="Tubulin/FtsZ, GTPase domain"/>
    <property type="match status" value="1"/>
</dbReference>
<dbReference type="InterPro" id="IPR002454">
    <property type="entry name" value="Gamma_tubulin"/>
</dbReference>
<dbReference type="InterPro" id="IPR008280">
    <property type="entry name" value="Tub_FtsZ_C"/>
</dbReference>
<dbReference type="InterPro" id="IPR000217">
    <property type="entry name" value="Tubulin"/>
</dbReference>
<dbReference type="InterPro" id="IPR037103">
    <property type="entry name" value="Tubulin/FtsZ-like_C"/>
</dbReference>
<dbReference type="InterPro" id="IPR018316">
    <property type="entry name" value="Tubulin/FtsZ_2-layer-sand-dom"/>
</dbReference>
<dbReference type="InterPro" id="IPR036525">
    <property type="entry name" value="Tubulin/FtsZ_GTPase_sf"/>
</dbReference>
<dbReference type="InterPro" id="IPR023123">
    <property type="entry name" value="Tubulin_C"/>
</dbReference>
<dbReference type="InterPro" id="IPR017975">
    <property type="entry name" value="Tubulin_CS"/>
</dbReference>
<dbReference type="InterPro" id="IPR003008">
    <property type="entry name" value="Tubulin_FtsZ_GTPase"/>
</dbReference>
<dbReference type="PANTHER" id="PTHR11588">
    <property type="entry name" value="TUBULIN"/>
    <property type="match status" value="1"/>
</dbReference>
<dbReference type="Pfam" id="PF00091">
    <property type="entry name" value="Tubulin"/>
    <property type="match status" value="1"/>
</dbReference>
<dbReference type="Pfam" id="PF03953">
    <property type="entry name" value="Tubulin_C"/>
    <property type="match status" value="1"/>
</dbReference>
<dbReference type="PRINTS" id="PR01164">
    <property type="entry name" value="GAMMATUBULIN"/>
</dbReference>
<dbReference type="PRINTS" id="PR01161">
    <property type="entry name" value="TUBULIN"/>
</dbReference>
<dbReference type="SMART" id="SM00864">
    <property type="entry name" value="Tubulin"/>
    <property type="match status" value="1"/>
</dbReference>
<dbReference type="SMART" id="SM00865">
    <property type="entry name" value="Tubulin_C"/>
    <property type="match status" value="1"/>
</dbReference>
<dbReference type="SUPFAM" id="SSF55307">
    <property type="entry name" value="Tubulin C-terminal domain-like"/>
    <property type="match status" value="1"/>
</dbReference>
<dbReference type="SUPFAM" id="SSF52490">
    <property type="entry name" value="Tubulin nucleotide-binding domain-like"/>
    <property type="match status" value="1"/>
</dbReference>
<dbReference type="PROSITE" id="PS00227">
    <property type="entry name" value="TUBULIN"/>
    <property type="match status" value="1"/>
</dbReference>
<sequence length="469" mass="52841">MPREIITIQVGQCGNQIGMEFWKQLCLEHGIGKDGLLEDFATQGGDRKDVFFYQADDQHFIPRSLLIDLEPRVINGIQNSEYRNLYNHENIFVAEHGGGAGNNWASGYHQGEQVVDDIMDMVDREADGSDSLEGFVLCHSIAGGTGSGMGSYLLETLNDRYSKKLVQTYSVFPNQMETSDVVVQPYNSLLTLKRLTLNADCVVVLDNTALNRIAVERLHLSNPTFAQTNSLVSTVMSASTTTLRYPGYMNNDLVGLLASLIPTPRCHFLMTGYTPLTVERQVNMIRKTTVLDVMRRLLQTKNVMVSSYARTKEASQAKYISILNIIQGEVDPTQVHESLQRIRERKLVNFIDWAPASIQVALSRKSPYVQTTHRVSGLMLANHTSIRHLFGKCLGQYEKLRKKQAFLDNYRKFPMFADNDLSEFDESREIIESLVDEYKACESPDYIKWGMEDPGEANVAADLDSKLVV</sequence>
<accession>Q41808</accession>
<comment type="function">
    <text>Tubulin is the major constituent of microtubules. The gamma chain is found at microtubule organizing centers (MTOC) such as the spindle poles, suggesting that it is involved in the minus-end nucleation of microtubule assembly.</text>
</comment>
<comment type="subcellular location">
    <subcellularLocation>
        <location evidence="1">Cytoplasm</location>
        <location evidence="1">Cytoskeleton</location>
        <location evidence="1">Microtubule organizing center</location>
    </subcellularLocation>
</comment>
<comment type="similarity">
    <text evidence="3">Belongs to the tubulin family.</text>
</comment>
<name>TBG2_MAIZE</name>
<reference key="1">
    <citation type="submission" date="1994-04" db="EMBL/GenBank/DDBJ databases">
        <authorList>
            <person name="Canaday J."/>
            <person name="Stoppin V."/>
            <person name="Endle M.C."/>
            <person name="Lambert A.M."/>
        </authorList>
    </citation>
    <scope>NUCLEOTIDE SEQUENCE [MRNA]</scope>
    <source>
        <strain>cv. Black Mexican Sweet</strain>
    </source>
</reference>
<proteinExistence type="evidence at transcript level"/>